<evidence type="ECO:0000255" key="1">
    <source>
        <dbReference type="HAMAP-Rule" id="MF_00083"/>
    </source>
</evidence>
<protein>
    <recommendedName>
        <fullName evidence="1">Peptidyl-tRNA hydrolase</fullName>
        <shortName evidence="1">Pth</shortName>
        <ecNumber evidence="1">3.1.1.29</ecNumber>
    </recommendedName>
</protein>
<proteinExistence type="inferred from homology"/>
<keyword id="KW-0963">Cytoplasm</keyword>
<keyword id="KW-0378">Hydrolase</keyword>
<keyword id="KW-1185">Reference proteome</keyword>
<keyword id="KW-0694">RNA-binding</keyword>
<keyword id="KW-0820">tRNA-binding</keyword>
<sequence length="203" mass="22363">MRLFVGLGNPGSRYAGNRHNIGFMALDAIARRHRAAPWRRKFQGEASEAVLGSERVLLLKPETYMNESGRAVAEAQRFYKIALDDVVVFHDELDLGPTKVRVKRGGGNAGHNGLRSITALCGNEYWRVRLGIGHPGDKALVHAYVLNDFAKAERPWVDDLCDALADHAALLAAGEDAAFQNKVHLALQGRGWDDVRRVGDKQA</sequence>
<reference key="1">
    <citation type="submission" date="2009-01" db="EMBL/GenBank/DDBJ databases">
        <title>Complete sequence of chromosome of Methylobacterium nodulans ORS 2060.</title>
        <authorList>
            <consortium name="US DOE Joint Genome Institute"/>
            <person name="Lucas S."/>
            <person name="Copeland A."/>
            <person name="Lapidus A."/>
            <person name="Glavina del Rio T."/>
            <person name="Dalin E."/>
            <person name="Tice H."/>
            <person name="Bruce D."/>
            <person name="Goodwin L."/>
            <person name="Pitluck S."/>
            <person name="Sims D."/>
            <person name="Brettin T."/>
            <person name="Detter J.C."/>
            <person name="Han C."/>
            <person name="Larimer F."/>
            <person name="Land M."/>
            <person name="Hauser L."/>
            <person name="Kyrpides N."/>
            <person name="Ivanova N."/>
            <person name="Marx C.J."/>
            <person name="Richardson P."/>
        </authorList>
    </citation>
    <scope>NUCLEOTIDE SEQUENCE [LARGE SCALE GENOMIC DNA]</scope>
    <source>
        <strain>LMG 21967 / CNCM I-2342 / ORS 2060</strain>
    </source>
</reference>
<organism>
    <name type="scientific">Methylobacterium nodulans (strain LMG 21967 / CNCM I-2342 / ORS 2060)</name>
    <dbReference type="NCBI Taxonomy" id="460265"/>
    <lineage>
        <taxon>Bacteria</taxon>
        <taxon>Pseudomonadati</taxon>
        <taxon>Pseudomonadota</taxon>
        <taxon>Alphaproteobacteria</taxon>
        <taxon>Hyphomicrobiales</taxon>
        <taxon>Methylobacteriaceae</taxon>
        <taxon>Methylobacterium</taxon>
    </lineage>
</organism>
<comment type="function">
    <text evidence="1">Hydrolyzes ribosome-free peptidyl-tRNAs (with 1 or more amino acids incorporated), which drop off the ribosome during protein synthesis, or as a result of ribosome stalling.</text>
</comment>
<comment type="function">
    <text evidence="1">Catalyzes the release of premature peptidyl moieties from peptidyl-tRNA molecules trapped in stalled 50S ribosomal subunits, and thus maintains levels of free tRNAs and 50S ribosomes.</text>
</comment>
<comment type="catalytic activity">
    <reaction evidence="1">
        <text>an N-acyl-L-alpha-aminoacyl-tRNA + H2O = an N-acyl-L-amino acid + a tRNA + H(+)</text>
        <dbReference type="Rhea" id="RHEA:54448"/>
        <dbReference type="Rhea" id="RHEA-COMP:10123"/>
        <dbReference type="Rhea" id="RHEA-COMP:13883"/>
        <dbReference type="ChEBI" id="CHEBI:15377"/>
        <dbReference type="ChEBI" id="CHEBI:15378"/>
        <dbReference type="ChEBI" id="CHEBI:59874"/>
        <dbReference type="ChEBI" id="CHEBI:78442"/>
        <dbReference type="ChEBI" id="CHEBI:138191"/>
        <dbReference type="EC" id="3.1.1.29"/>
    </reaction>
</comment>
<comment type="subunit">
    <text evidence="1">Monomer.</text>
</comment>
<comment type="subcellular location">
    <subcellularLocation>
        <location evidence="1">Cytoplasm</location>
    </subcellularLocation>
</comment>
<comment type="similarity">
    <text evidence="1">Belongs to the PTH family.</text>
</comment>
<feature type="chain" id="PRO_1000118398" description="Peptidyl-tRNA hydrolase">
    <location>
        <begin position="1"/>
        <end position="203"/>
    </location>
</feature>
<feature type="active site" description="Proton acceptor" evidence="1">
    <location>
        <position position="19"/>
    </location>
</feature>
<feature type="binding site" evidence="1">
    <location>
        <position position="14"/>
    </location>
    <ligand>
        <name>tRNA</name>
        <dbReference type="ChEBI" id="CHEBI:17843"/>
    </ligand>
</feature>
<feature type="binding site" evidence="1">
    <location>
        <position position="64"/>
    </location>
    <ligand>
        <name>tRNA</name>
        <dbReference type="ChEBI" id="CHEBI:17843"/>
    </ligand>
</feature>
<feature type="binding site" evidence="1">
    <location>
        <position position="66"/>
    </location>
    <ligand>
        <name>tRNA</name>
        <dbReference type="ChEBI" id="CHEBI:17843"/>
    </ligand>
</feature>
<feature type="binding site" evidence="1">
    <location>
        <position position="112"/>
    </location>
    <ligand>
        <name>tRNA</name>
        <dbReference type="ChEBI" id="CHEBI:17843"/>
    </ligand>
</feature>
<feature type="site" description="Discriminates between blocked and unblocked aminoacyl-tRNA" evidence="1">
    <location>
        <position position="9"/>
    </location>
</feature>
<feature type="site" description="Stabilizes the basic form of H active site to accept a proton" evidence="1">
    <location>
        <position position="91"/>
    </location>
</feature>
<dbReference type="EC" id="3.1.1.29" evidence="1"/>
<dbReference type="EMBL" id="CP001349">
    <property type="protein sequence ID" value="ACL57769.1"/>
    <property type="molecule type" value="Genomic_DNA"/>
</dbReference>
<dbReference type="RefSeq" id="WP_015929444.1">
    <property type="nucleotide sequence ID" value="NC_011894.1"/>
</dbReference>
<dbReference type="SMR" id="B8IFN4"/>
<dbReference type="STRING" id="460265.Mnod_2818"/>
<dbReference type="KEGG" id="mno:Mnod_2818"/>
<dbReference type="eggNOG" id="COG0193">
    <property type="taxonomic scope" value="Bacteria"/>
</dbReference>
<dbReference type="HOGENOM" id="CLU_062456_1_0_5"/>
<dbReference type="OrthoDB" id="9800507at2"/>
<dbReference type="Proteomes" id="UP000008207">
    <property type="component" value="Chromosome"/>
</dbReference>
<dbReference type="GO" id="GO:0005737">
    <property type="term" value="C:cytoplasm"/>
    <property type="evidence" value="ECO:0007669"/>
    <property type="project" value="UniProtKB-SubCell"/>
</dbReference>
<dbReference type="GO" id="GO:0004045">
    <property type="term" value="F:peptidyl-tRNA hydrolase activity"/>
    <property type="evidence" value="ECO:0007669"/>
    <property type="project" value="UniProtKB-UniRule"/>
</dbReference>
<dbReference type="GO" id="GO:0000049">
    <property type="term" value="F:tRNA binding"/>
    <property type="evidence" value="ECO:0007669"/>
    <property type="project" value="UniProtKB-UniRule"/>
</dbReference>
<dbReference type="GO" id="GO:0006515">
    <property type="term" value="P:protein quality control for misfolded or incompletely synthesized proteins"/>
    <property type="evidence" value="ECO:0007669"/>
    <property type="project" value="UniProtKB-UniRule"/>
</dbReference>
<dbReference type="GO" id="GO:0072344">
    <property type="term" value="P:rescue of stalled ribosome"/>
    <property type="evidence" value="ECO:0007669"/>
    <property type="project" value="UniProtKB-UniRule"/>
</dbReference>
<dbReference type="CDD" id="cd00462">
    <property type="entry name" value="PTH"/>
    <property type="match status" value="1"/>
</dbReference>
<dbReference type="FunFam" id="3.40.50.1470:FF:000001">
    <property type="entry name" value="Peptidyl-tRNA hydrolase"/>
    <property type="match status" value="1"/>
</dbReference>
<dbReference type="Gene3D" id="3.40.50.1470">
    <property type="entry name" value="Peptidyl-tRNA hydrolase"/>
    <property type="match status" value="1"/>
</dbReference>
<dbReference type="HAMAP" id="MF_00083">
    <property type="entry name" value="Pept_tRNA_hydro_bact"/>
    <property type="match status" value="1"/>
</dbReference>
<dbReference type="InterPro" id="IPR001328">
    <property type="entry name" value="Pept_tRNA_hydro"/>
</dbReference>
<dbReference type="InterPro" id="IPR018171">
    <property type="entry name" value="Pept_tRNA_hydro_CS"/>
</dbReference>
<dbReference type="InterPro" id="IPR036416">
    <property type="entry name" value="Pept_tRNA_hydro_sf"/>
</dbReference>
<dbReference type="NCBIfam" id="TIGR00447">
    <property type="entry name" value="pth"/>
    <property type="match status" value="1"/>
</dbReference>
<dbReference type="PANTHER" id="PTHR17224">
    <property type="entry name" value="PEPTIDYL-TRNA HYDROLASE"/>
    <property type="match status" value="1"/>
</dbReference>
<dbReference type="PANTHER" id="PTHR17224:SF1">
    <property type="entry name" value="PEPTIDYL-TRNA HYDROLASE"/>
    <property type="match status" value="1"/>
</dbReference>
<dbReference type="Pfam" id="PF01195">
    <property type="entry name" value="Pept_tRNA_hydro"/>
    <property type="match status" value="1"/>
</dbReference>
<dbReference type="SUPFAM" id="SSF53178">
    <property type="entry name" value="Peptidyl-tRNA hydrolase-like"/>
    <property type="match status" value="1"/>
</dbReference>
<dbReference type="PROSITE" id="PS01195">
    <property type="entry name" value="PEPT_TRNA_HYDROL_1"/>
    <property type="match status" value="1"/>
</dbReference>
<dbReference type="PROSITE" id="PS01196">
    <property type="entry name" value="PEPT_TRNA_HYDROL_2"/>
    <property type="match status" value="1"/>
</dbReference>
<gene>
    <name evidence="1" type="primary">pth</name>
    <name type="ordered locus">Mnod_2818</name>
</gene>
<accession>B8IFN4</accession>
<name>PTH_METNO</name>